<organism>
    <name type="scientific">Centruroides exilicauda</name>
    <name type="common">Bark scorpion</name>
    <name type="synonym">Buthus exilicauda</name>
    <dbReference type="NCBI Taxonomy" id="6879"/>
    <lineage>
        <taxon>Eukaryota</taxon>
        <taxon>Metazoa</taxon>
        <taxon>Ecdysozoa</taxon>
        <taxon>Arthropoda</taxon>
        <taxon>Chelicerata</taxon>
        <taxon>Arachnida</taxon>
        <taxon>Scorpiones</taxon>
        <taxon>Buthida</taxon>
        <taxon>Buthoidea</taxon>
        <taxon>Buthidae</taxon>
        <taxon>Centruroides</taxon>
    </lineage>
</organism>
<dbReference type="EMBL" id="AY649870">
    <property type="protein sequence ID" value="AAT98003.1"/>
    <property type="molecule type" value="mRNA"/>
</dbReference>
<dbReference type="SMR" id="Q68PG3"/>
<dbReference type="GO" id="GO:0005576">
    <property type="term" value="C:extracellular region"/>
    <property type="evidence" value="ECO:0007669"/>
    <property type="project" value="UniProtKB-SubCell"/>
</dbReference>
<dbReference type="GO" id="GO:0019871">
    <property type="term" value="F:sodium channel inhibitor activity"/>
    <property type="evidence" value="ECO:0007669"/>
    <property type="project" value="InterPro"/>
</dbReference>
<dbReference type="GO" id="GO:0090729">
    <property type="term" value="F:toxin activity"/>
    <property type="evidence" value="ECO:0007669"/>
    <property type="project" value="UniProtKB-KW"/>
</dbReference>
<dbReference type="CDD" id="cd23106">
    <property type="entry name" value="neurotoxins_LC_scorpion"/>
    <property type="match status" value="1"/>
</dbReference>
<dbReference type="Gene3D" id="3.30.30.10">
    <property type="entry name" value="Knottin, scorpion toxin-like"/>
    <property type="match status" value="1"/>
</dbReference>
<dbReference type="InterPro" id="IPR044062">
    <property type="entry name" value="LCN-type_CS_alpha_beta_dom"/>
</dbReference>
<dbReference type="InterPro" id="IPR036574">
    <property type="entry name" value="Scorpion_toxin-like_sf"/>
</dbReference>
<dbReference type="InterPro" id="IPR018218">
    <property type="entry name" value="Scorpion_toxinL"/>
</dbReference>
<dbReference type="InterPro" id="IPR002061">
    <property type="entry name" value="Scorpion_toxinL/defensin"/>
</dbReference>
<dbReference type="Pfam" id="PF00537">
    <property type="entry name" value="Toxin_3"/>
    <property type="match status" value="1"/>
</dbReference>
<dbReference type="PRINTS" id="PR00285">
    <property type="entry name" value="SCORPNTOXIN"/>
</dbReference>
<dbReference type="SUPFAM" id="SSF57095">
    <property type="entry name" value="Scorpion toxin-like"/>
    <property type="match status" value="1"/>
</dbReference>
<dbReference type="PROSITE" id="PS51863">
    <property type="entry name" value="LCN_CSAB"/>
    <property type="match status" value="1"/>
</dbReference>
<name>SCX12_CENEX</name>
<reference key="1">
    <citation type="journal article" date="2004" name="Biochimie">
        <title>Biochemical, genetic and physiological characterization of venom components from two species of scorpions: Centruroides exilicauda Wood and Centruroides sculpturatus Ewing.</title>
        <authorList>
            <person name="Valdez-Cruz N.A."/>
            <person name="Davila S."/>
            <person name="Licea A."/>
            <person name="Corona M."/>
            <person name="Zamudio F.Z."/>
            <person name="Garcia-Valdes J."/>
            <person name="Boyer L."/>
            <person name="Possani L.D."/>
        </authorList>
    </citation>
    <scope>NUCLEOTIDE SEQUENCE [MRNA]</scope>
    <source>
        <tissue>Venom gland</tissue>
    </source>
</reference>
<protein>
    <recommendedName>
        <fullName>Toxin Cex12</fullName>
    </recommendedName>
</protein>
<evidence type="ECO:0000250" key="1"/>
<evidence type="ECO:0000255" key="2"/>
<evidence type="ECO:0000255" key="3">
    <source>
        <dbReference type="PROSITE-ProRule" id="PRU01210"/>
    </source>
</evidence>
<evidence type="ECO:0000305" key="4"/>
<keyword id="KW-0165">Cleavage on pair of basic residues</keyword>
<keyword id="KW-1015">Disulfide bond</keyword>
<keyword id="KW-0872">Ion channel impairing toxin</keyword>
<keyword id="KW-0528">Neurotoxin</keyword>
<keyword id="KW-0964">Secreted</keyword>
<keyword id="KW-0732">Signal</keyword>
<keyword id="KW-0800">Toxin</keyword>
<keyword id="KW-0738">Voltage-gated sodium channel impairing toxin</keyword>
<accession>Q68PG3</accession>
<comment type="function">
    <text evidence="1">Beta toxins bind voltage-independently at site-4 of sodium channels (Nav) and shift the voltage of activation toward more negative potentials thereby affecting sodium channel activation and promoting spontaneous and repetitive firing.</text>
</comment>
<comment type="subcellular location">
    <subcellularLocation>
        <location evidence="1">Secreted</location>
    </subcellularLocation>
</comment>
<comment type="tissue specificity">
    <text>Expressed by the venom gland.</text>
</comment>
<comment type="domain">
    <text evidence="4">Has the structural arrangement of an alpha-helix connected to antiparallel beta-sheets by disulfide bonds (CS-alpha/beta).</text>
</comment>
<comment type="similarity">
    <text evidence="4">Belongs to the long (4 C-C) scorpion toxin superfamily. Sodium channel inhibitor family. Beta subfamily.</text>
</comment>
<proteinExistence type="evidence at transcript level"/>
<sequence>MNSLLMITTCLILVGTVWANDGYLFDKRKRCTLECIDKTGDKNCDRNCKKEGGSFGKCSYSACWCKGLPGITPISRTPGKTCRK</sequence>
<feature type="signal peptide" evidence="2">
    <location>
        <begin position="1"/>
        <end position="19"/>
    </location>
</feature>
<feature type="chain" id="PRO_0000254084" description="Toxin Cex12">
    <location>
        <begin position="20"/>
        <end position="82"/>
    </location>
</feature>
<feature type="domain" description="LCN-type CS-alpha/beta" evidence="3">
    <location>
        <begin position="20"/>
        <end position="83"/>
    </location>
</feature>
<feature type="disulfide bond" evidence="3">
    <location>
        <begin position="31"/>
        <end position="82"/>
    </location>
</feature>
<feature type="disulfide bond" evidence="3">
    <location>
        <begin position="35"/>
        <end position="58"/>
    </location>
</feature>
<feature type="disulfide bond" evidence="3">
    <location>
        <begin position="44"/>
        <end position="63"/>
    </location>
</feature>
<feature type="disulfide bond" evidence="3">
    <location>
        <begin position="48"/>
        <end position="65"/>
    </location>
</feature>